<sequence length="82" mass="9278">MVFLLCFFLVADVSYGINGDCELPKVVGPCRASHPRYYYNSSSKRCEKFIYGGCRGNANNFHTLEECEKVCGVRSRDSPKEN</sequence>
<reference key="1">
    <citation type="journal article" date="2009" name="BMC Genomics">
        <title>Comprehensive EST analysis of the symbiotic sea anemone, Anemonia viridis.</title>
        <authorList>
            <person name="Sabourault C."/>
            <person name="Ganot P."/>
            <person name="Deleury E."/>
            <person name="Allemand D."/>
            <person name="Furla P."/>
        </authorList>
    </citation>
    <scope>NUCLEOTIDE SEQUENCE [MRNA]</scope>
</reference>
<reference key="2">
    <citation type="journal article" date="2011" name="BMC Genomics">
        <title>The mining of toxin-like polypeptides from EST database by single residue distribution analysis.</title>
        <authorList>
            <person name="Kozlov S."/>
            <person name="Grishin E."/>
        </authorList>
    </citation>
    <scope>NOMENCLATURE</scope>
</reference>
<reference key="3">
    <citation type="journal article" date="2012" name="Toxicon">
        <title>Development of a rational nomenclature for naming peptide and protein toxins from sea anemones.</title>
        <authorList>
            <person name="Oliveira J.S."/>
            <person name="Fuentes-Silva D."/>
            <person name="King G.F."/>
        </authorList>
    </citation>
    <scope>NOMENCLATURE</scope>
</reference>
<proteinExistence type="inferred from homology"/>
<name>VKT7_ANEVI</name>
<accession>P0DN11</accession>
<dbReference type="EMBL" id="FK740712">
    <property type="status" value="NOT_ANNOTATED_CDS"/>
    <property type="molecule type" value="mRNA"/>
</dbReference>
<dbReference type="EMBL" id="FK729058">
    <property type="status" value="NOT_ANNOTATED_CDS"/>
    <property type="molecule type" value="mRNA"/>
</dbReference>
<dbReference type="EMBL" id="FK742724">
    <property type="status" value="NOT_ANNOTATED_CDS"/>
    <property type="molecule type" value="mRNA"/>
</dbReference>
<dbReference type="SMR" id="P0DN11"/>
<dbReference type="GO" id="GO:0005576">
    <property type="term" value="C:extracellular region"/>
    <property type="evidence" value="ECO:0007669"/>
    <property type="project" value="UniProtKB-SubCell"/>
</dbReference>
<dbReference type="GO" id="GO:0042151">
    <property type="term" value="C:nematocyst"/>
    <property type="evidence" value="ECO:0007669"/>
    <property type="project" value="UniProtKB-SubCell"/>
</dbReference>
<dbReference type="GO" id="GO:0015459">
    <property type="term" value="F:potassium channel regulator activity"/>
    <property type="evidence" value="ECO:0007669"/>
    <property type="project" value="UniProtKB-KW"/>
</dbReference>
<dbReference type="GO" id="GO:0004867">
    <property type="term" value="F:serine-type endopeptidase inhibitor activity"/>
    <property type="evidence" value="ECO:0007669"/>
    <property type="project" value="UniProtKB-KW"/>
</dbReference>
<dbReference type="GO" id="GO:0090729">
    <property type="term" value="F:toxin activity"/>
    <property type="evidence" value="ECO:0007669"/>
    <property type="project" value="UniProtKB-KW"/>
</dbReference>
<dbReference type="CDD" id="cd22633">
    <property type="entry name" value="Kunitz_actitoxin-like"/>
    <property type="match status" value="1"/>
</dbReference>
<dbReference type="FunFam" id="4.10.410.10:FF:000021">
    <property type="entry name" value="Serine protease inhibitor, putative"/>
    <property type="match status" value="1"/>
</dbReference>
<dbReference type="Gene3D" id="4.10.410.10">
    <property type="entry name" value="Pancreatic trypsin inhibitor Kunitz domain"/>
    <property type="match status" value="1"/>
</dbReference>
<dbReference type="InterPro" id="IPR002223">
    <property type="entry name" value="Kunitz_BPTI"/>
</dbReference>
<dbReference type="InterPro" id="IPR036880">
    <property type="entry name" value="Kunitz_BPTI_sf"/>
</dbReference>
<dbReference type="InterPro" id="IPR020901">
    <property type="entry name" value="Prtase_inh_Kunz-CS"/>
</dbReference>
<dbReference type="InterPro" id="IPR050098">
    <property type="entry name" value="TFPI/VKTCI-like"/>
</dbReference>
<dbReference type="PANTHER" id="PTHR10083:SF374">
    <property type="entry name" value="BPTI_KUNITZ INHIBITOR DOMAIN-CONTAINING PROTEIN"/>
    <property type="match status" value="1"/>
</dbReference>
<dbReference type="PANTHER" id="PTHR10083">
    <property type="entry name" value="KUNITZ-TYPE PROTEASE INHIBITOR-RELATED"/>
    <property type="match status" value="1"/>
</dbReference>
<dbReference type="Pfam" id="PF00014">
    <property type="entry name" value="Kunitz_BPTI"/>
    <property type="match status" value="1"/>
</dbReference>
<dbReference type="PRINTS" id="PR00759">
    <property type="entry name" value="BASICPTASE"/>
</dbReference>
<dbReference type="SMART" id="SM00131">
    <property type="entry name" value="KU"/>
    <property type="match status" value="1"/>
</dbReference>
<dbReference type="SUPFAM" id="SSF57362">
    <property type="entry name" value="BPTI-like"/>
    <property type="match status" value="1"/>
</dbReference>
<dbReference type="PROSITE" id="PS00280">
    <property type="entry name" value="BPTI_KUNITZ_1"/>
    <property type="match status" value="1"/>
</dbReference>
<dbReference type="PROSITE" id="PS50279">
    <property type="entry name" value="BPTI_KUNITZ_2"/>
    <property type="match status" value="1"/>
</dbReference>
<comment type="function">
    <text evidence="2 3">Serine protease inhibitor that inhibits both tissue and plasma kallikreins. Has hemolytic activity. Inhibits voltage-gated potassium channels (Kv).</text>
</comment>
<comment type="subcellular location">
    <subcellularLocation>
        <location evidence="7">Secreted</location>
    </subcellularLocation>
    <subcellularLocation>
        <location evidence="7">Nematocyst</location>
    </subcellularLocation>
</comment>
<comment type="similarity">
    <text evidence="7">Belongs to the venom Kunitz-type family. Sea anemone type 2 potassium channel toxin subfamily.</text>
</comment>
<comment type="caution">
    <text evidence="7">Opinions are divided on whether Anemonia viridis (Forsskal, 1775) and Anemonia sulcata (Pennant, 1777) are separate species.</text>
</comment>
<evidence type="ECO:0000250" key="1"/>
<evidence type="ECO:0000250" key="2">
    <source>
        <dbReference type="UniProtKB" id="P10280"/>
    </source>
</evidence>
<evidence type="ECO:0000250" key="3">
    <source>
        <dbReference type="UniProtKB" id="Q9TWF8"/>
    </source>
</evidence>
<evidence type="ECO:0000255" key="4">
    <source>
        <dbReference type="PROSITE-ProRule" id="PRU00031"/>
    </source>
</evidence>
<evidence type="ECO:0000303" key="5">
    <source>
    </source>
</evidence>
<evidence type="ECO:0000303" key="6">
    <source>
    </source>
</evidence>
<evidence type="ECO:0000305" key="7"/>
<feature type="signal peptide" evidence="2">
    <location>
        <begin position="1"/>
        <end position="16"/>
    </location>
</feature>
<feature type="chain" id="PRO_0000433761" description="U-actitoxin-Avd3j">
    <location>
        <begin position="17"/>
        <end position="75"/>
    </location>
</feature>
<feature type="propeptide" id="PRO_0000433762" evidence="2">
    <location>
        <begin position="76"/>
        <end position="82"/>
    </location>
</feature>
<feature type="domain" description="BPTI/Kunitz inhibitor" evidence="4">
    <location>
        <begin position="21"/>
        <end position="71"/>
    </location>
</feature>
<feature type="site" description="Reactive bond" evidence="1">
    <location>
        <begin position="31"/>
        <end position="32"/>
    </location>
</feature>
<feature type="disulfide bond" evidence="4">
    <location>
        <begin position="21"/>
        <end position="71"/>
    </location>
</feature>
<feature type="disulfide bond" evidence="4">
    <location>
        <begin position="30"/>
        <end position="54"/>
    </location>
</feature>
<feature type="disulfide bond" evidence="4">
    <location>
        <begin position="46"/>
        <end position="67"/>
    </location>
</feature>
<organism>
    <name type="scientific">Anemonia viridis</name>
    <name type="common">Snakelocks anemone</name>
    <dbReference type="NCBI Taxonomy" id="51769"/>
    <lineage>
        <taxon>Eukaryota</taxon>
        <taxon>Metazoa</taxon>
        <taxon>Cnidaria</taxon>
        <taxon>Anthozoa</taxon>
        <taxon>Hexacorallia</taxon>
        <taxon>Actiniaria</taxon>
        <taxon>Actiniidae</taxon>
        <taxon>Anemonia</taxon>
    </lineage>
</organism>
<keyword id="KW-1015">Disulfide bond</keyword>
<keyword id="KW-0872">Ion channel impairing toxin</keyword>
<keyword id="KW-0166">Nematocyst</keyword>
<keyword id="KW-0632">Potassium channel impairing toxin</keyword>
<keyword id="KW-0646">Protease inhibitor</keyword>
<keyword id="KW-0964">Secreted</keyword>
<keyword id="KW-0722">Serine protease inhibitor</keyword>
<keyword id="KW-0732">Signal</keyword>
<keyword id="KW-0800">Toxin</keyword>
<keyword id="KW-1220">Voltage-gated potassium channel impairing toxin</keyword>
<protein>
    <recommendedName>
        <fullName evidence="6">U-actitoxin-Avd3j</fullName>
        <shortName evidence="6">U-AITX-Avd3j</shortName>
    </recommendedName>
    <alternativeName>
        <fullName evidence="5">AsKC7</fullName>
    </alternativeName>
</protein>